<dbReference type="EMBL" id="L21172">
    <property type="protein sequence ID" value="AAC37186.1"/>
    <property type="molecule type" value="mRNA"/>
</dbReference>
<dbReference type="PDB" id="8OVA">
    <property type="method" value="EM"/>
    <property type="resolution" value="2.47 A"/>
    <property type="chains" value="BX=1-164"/>
</dbReference>
<dbReference type="PDB" id="8OVE">
    <property type="method" value="EM"/>
    <property type="resolution" value="2.60 A"/>
    <property type="chains" value="BX=1-164"/>
</dbReference>
<dbReference type="PDBsum" id="8OVA"/>
<dbReference type="PDBsum" id="8OVE"/>
<dbReference type="EMDB" id="EMD-17208"/>
<dbReference type="EMDB" id="EMD-17212"/>
<dbReference type="SMR" id="P41165"/>
<dbReference type="GO" id="GO:1990904">
    <property type="term" value="C:ribonucleoprotein complex"/>
    <property type="evidence" value="ECO:0007669"/>
    <property type="project" value="UniProtKB-KW"/>
</dbReference>
<dbReference type="GO" id="GO:0005840">
    <property type="term" value="C:ribosome"/>
    <property type="evidence" value="ECO:0007669"/>
    <property type="project" value="UniProtKB-KW"/>
</dbReference>
<dbReference type="GO" id="GO:0019843">
    <property type="term" value="F:rRNA binding"/>
    <property type="evidence" value="ECO:0007669"/>
    <property type="project" value="UniProtKB-KW"/>
</dbReference>
<dbReference type="GO" id="GO:0003735">
    <property type="term" value="F:structural constituent of ribosome"/>
    <property type="evidence" value="ECO:0007669"/>
    <property type="project" value="InterPro"/>
</dbReference>
<dbReference type="GO" id="GO:0006412">
    <property type="term" value="P:translation"/>
    <property type="evidence" value="ECO:0007669"/>
    <property type="project" value="InterPro"/>
</dbReference>
<dbReference type="FunFam" id="3.30.70.330:FF:000035">
    <property type="entry name" value="60S ribosomal protein L23a"/>
    <property type="match status" value="1"/>
</dbReference>
<dbReference type="Gene3D" id="3.30.70.330">
    <property type="match status" value="1"/>
</dbReference>
<dbReference type="HAMAP" id="MF_01369_A">
    <property type="entry name" value="Ribosomal_uL23_A"/>
    <property type="match status" value="1"/>
</dbReference>
<dbReference type="HAMAP" id="MF_01369_B">
    <property type="entry name" value="Ribosomal_uL23_B"/>
    <property type="match status" value="1"/>
</dbReference>
<dbReference type="InterPro" id="IPR012677">
    <property type="entry name" value="Nucleotide-bd_a/b_plait_sf"/>
</dbReference>
<dbReference type="InterPro" id="IPR019985">
    <property type="entry name" value="Ribosomal_uL23"/>
</dbReference>
<dbReference type="InterPro" id="IPR013025">
    <property type="entry name" value="Ribosomal_uL23-like"/>
</dbReference>
<dbReference type="InterPro" id="IPR012678">
    <property type="entry name" value="Ribosomal_uL23/eL15/eS24_sf"/>
</dbReference>
<dbReference type="InterPro" id="IPR001014">
    <property type="entry name" value="Ribosomal_uL23_CS"/>
</dbReference>
<dbReference type="NCBIfam" id="NF011118">
    <property type="entry name" value="PRK14548.1"/>
    <property type="match status" value="1"/>
</dbReference>
<dbReference type="NCBIfam" id="TIGR03636">
    <property type="entry name" value="uL23_arch"/>
    <property type="match status" value="1"/>
</dbReference>
<dbReference type="PANTHER" id="PTHR11620">
    <property type="entry name" value="60S RIBOSOMAL PROTEIN L23A"/>
    <property type="match status" value="1"/>
</dbReference>
<dbReference type="Pfam" id="PF00276">
    <property type="entry name" value="Ribosomal_L23"/>
    <property type="match status" value="1"/>
</dbReference>
<dbReference type="SUPFAM" id="SSF54189">
    <property type="entry name" value="Ribosomal proteins S24e, L23 and L15e"/>
    <property type="match status" value="1"/>
</dbReference>
<dbReference type="PROSITE" id="PS00050">
    <property type="entry name" value="RIBOSOMAL_L23"/>
    <property type="match status" value="1"/>
</dbReference>
<reference key="1">
    <citation type="journal article" date="1993" name="Nucleic Acids Res.">
        <title>Ribosomal protein L25 from Trypanosoma brucei: phylogeny and molecular co-evolution of an rRNA-binding protein and its rRNA binding site.</title>
        <authorList>
            <person name="Metzenberg S."/>
            <person name="Joblet C."/>
            <person name="Verspieren P."/>
            <person name="Agabian N."/>
        </authorList>
    </citation>
    <scope>NUCLEOTIDE SEQUENCE [MRNA]</scope>
    <source>
        <strain>ISTAT 1.1</strain>
    </source>
</reference>
<feature type="chain" id="PRO_0000129472" description="Large ribosomal subunit protein uL23">
    <location>
        <begin position="1"/>
        <end position="164"/>
    </location>
</feature>
<feature type="region of interest" description="Disordered" evidence="2">
    <location>
        <begin position="1"/>
        <end position="41"/>
    </location>
</feature>
<evidence type="ECO:0000250" key="1"/>
<evidence type="ECO:0000256" key="2">
    <source>
        <dbReference type="SAM" id="MobiDB-lite"/>
    </source>
</evidence>
<evidence type="ECO:0000305" key="3"/>
<proteinExistence type="evidence at protein level"/>
<comment type="function">
    <text evidence="1">This protein binds to a specific region on the 26S rRNA.</text>
</comment>
<comment type="similarity">
    <text evidence="3">Belongs to the universal ribosomal protein uL23 family.</text>
</comment>
<accession>P41165</accession>
<protein>
    <recommendedName>
        <fullName evidence="3">Large ribosomal subunit protein uL23</fullName>
    </recommendedName>
    <alternativeName>
        <fullName>60S ribosomal protein L23a</fullName>
    </alternativeName>
    <alternativeName>
        <fullName>L25</fullName>
    </alternativeName>
</protein>
<organism>
    <name type="scientific">Trypanosoma brucei brucei</name>
    <dbReference type="NCBI Taxonomy" id="5702"/>
    <lineage>
        <taxon>Eukaryota</taxon>
        <taxon>Discoba</taxon>
        <taxon>Euglenozoa</taxon>
        <taxon>Kinetoplastea</taxon>
        <taxon>Metakinetoplastina</taxon>
        <taxon>Trypanosomatida</taxon>
        <taxon>Trypanosomatidae</taxon>
        <taxon>Trypanosoma</taxon>
    </lineage>
</organism>
<name>RL23A_TRYBB</name>
<keyword id="KW-0002">3D-structure</keyword>
<keyword id="KW-0687">Ribonucleoprotein</keyword>
<keyword id="KW-0689">Ribosomal protein</keyword>
<keyword id="KW-0694">RNA-binding</keyword>
<keyword id="KW-0699">rRNA-binding</keyword>
<gene>
    <name type="primary">RPL23A</name>
    <name type="synonym">RPL25</name>
</gene>
<sequence>MPAKAASAAASKKNSAPKSAVSKKVAKKGAPAAAAKPTKVVKVTKRKAYTRPQFRRPHTYRRPATVKPSSNVSAIKNKWDAFRIIRYPLTTDKAMKKIEENNTLTFIVDSRANKTEIKKAIRKLYQVKTVKVNTLIRPDGLKKAYIRLSASYDALDTANKMGLV</sequence>